<protein>
    <recommendedName>
        <fullName>Uncharacterized 14.5 kDa early protein</fullName>
    </recommendedName>
</protein>
<organism>
    <name type="scientific">Human adenovirus B serotype 7</name>
    <name type="common">HAdV-7</name>
    <name type="synonym">Human adenovirus 7</name>
    <dbReference type="NCBI Taxonomy" id="10519"/>
    <lineage>
        <taxon>Viruses</taxon>
        <taxon>Varidnaviria</taxon>
        <taxon>Bamfordvirae</taxon>
        <taxon>Preplasmiviricota</taxon>
        <taxon>Tectiliviricetes</taxon>
        <taxon>Rowavirales</taxon>
        <taxon>Adenoviridae</taxon>
        <taxon>Mastadenovirus</taxon>
        <taxon>Human mastadenovirus B</taxon>
    </lineage>
</organism>
<organismHost>
    <name type="scientific">Homo sapiens</name>
    <name type="common">Human</name>
    <dbReference type="NCBI Taxonomy" id="9606"/>
</organismHost>
<accession>P05667</accession>
<proteinExistence type="predicted"/>
<dbReference type="EMBL" id="X03000">
    <property type="protein sequence ID" value="CAA26771.1"/>
    <property type="molecule type" value="Genomic_DNA"/>
</dbReference>
<sequence length="133" mass="14557">MRDDAAVDILDLTPLGESYRPRELEPEREFNRINLGIVDGGLPKDFLHVARVVLVGDLGHELLDLFLLEISAARSLDGGREVVGDAPNELRESIHARLVPDAAVDHSPHGISRAHDHLGEVELHVAGEDRIVA</sequence>
<reference key="1">
    <citation type="journal article" date="1983" name="Gene">
        <title>The nucleotide sequence of the genes encoded in early region 2b of human adenovirus type 7.</title>
        <authorList>
            <person name="Engler J.A."/>
            <person name="Hoppe M.S."/>
            <person name="van Bree M.P."/>
        </authorList>
    </citation>
    <scope>NUCLEOTIDE SEQUENCE [GENOMIC DNA]</scope>
    <source>
        <strain>Gomen</strain>
    </source>
</reference>
<feature type="chain" id="PRO_0000221924" description="Uncharacterized 14.5 kDa early protein">
    <location>
        <begin position="1"/>
        <end position="133"/>
    </location>
</feature>
<keyword id="KW-0244">Early protein</keyword>
<name>Y145_ADE07</name>